<reference key="1">
    <citation type="journal article" date="2004" name="Nucleic Acids Res.">
        <title>Genome sequence of Symbiobacterium thermophilum, an uncultivable bacterium that depends on microbial commensalism.</title>
        <authorList>
            <person name="Ueda K."/>
            <person name="Yamashita A."/>
            <person name="Ishikawa J."/>
            <person name="Shimada M."/>
            <person name="Watsuji T."/>
            <person name="Morimura K."/>
            <person name="Ikeda H."/>
            <person name="Hattori M."/>
            <person name="Beppu T."/>
        </authorList>
    </citation>
    <scope>NUCLEOTIDE SEQUENCE [LARGE SCALE GENOMIC DNA]</scope>
    <source>
        <strain>DSM 24528 / JCM 14929 / IAM 14863 / T</strain>
    </source>
</reference>
<proteinExistence type="inferred from homology"/>
<name>SSRP_SYMTH</name>
<protein>
    <recommendedName>
        <fullName evidence="1">SsrA-binding protein</fullName>
    </recommendedName>
    <alternativeName>
        <fullName evidence="1">Small protein B</fullName>
    </alternativeName>
</protein>
<gene>
    <name evidence="1" type="primary">smpB</name>
    <name type="ordered locus">STH340</name>
</gene>
<dbReference type="EMBL" id="AP006840">
    <property type="protein sequence ID" value="BAD39325.1"/>
    <property type="molecule type" value="Genomic_DNA"/>
</dbReference>
<dbReference type="RefSeq" id="WP_011194474.1">
    <property type="nucleotide sequence ID" value="NC_006177.1"/>
</dbReference>
<dbReference type="SMR" id="Q67SL8"/>
<dbReference type="STRING" id="292459.STH340"/>
<dbReference type="KEGG" id="sth:STH340"/>
<dbReference type="eggNOG" id="COG0691">
    <property type="taxonomic scope" value="Bacteria"/>
</dbReference>
<dbReference type="HOGENOM" id="CLU_108953_0_0_9"/>
<dbReference type="OrthoDB" id="9805462at2"/>
<dbReference type="Proteomes" id="UP000000417">
    <property type="component" value="Chromosome"/>
</dbReference>
<dbReference type="GO" id="GO:0005829">
    <property type="term" value="C:cytosol"/>
    <property type="evidence" value="ECO:0007669"/>
    <property type="project" value="TreeGrafter"/>
</dbReference>
<dbReference type="GO" id="GO:0003723">
    <property type="term" value="F:RNA binding"/>
    <property type="evidence" value="ECO:0007669"/>
    <property type="project" value="UniProtKB-UniRule"/>
</dbReference>
<dbReference type="GO" id="GO:0070929">
    <property type="term" value="P:trans-translation"/>
    <property type="evidence" value="ECO:0007669"/>
    <property type="project" value="UniProtKB-UniRule"/>
</dbReference>
<dbReference type="CDD" id="cd09294">
    <property type="entry name" value="SmpB"/>
    <property type="match status" value="1"/>
</dbReference>
<dbReference type="Gene3D" id="2.40.280.10">
    <property type="match status" value="1"/>
</dbReference>
<dbReference type="HAMAP" id="MF_00023">
    <property type="entry name" value="SmpB"/>
    <property type="match status" value="1"/>
</dbReference>
<dbReference type="InterPro" id="IPR023620">
    <property type="entry name" value="SmpB"/>
</dbReference>
<dbReference type="InterPro" id="IPR000037">
    <property type="entry name" value="SsrA-bd_prot"/>
</dbReference>
<dbReference type="NCBIfam" id="NF003843">
    <property type="entry name" value="PRK05422.1"/>
    <property type="match status" value="1"/>
</dbReference>
<dbReference type="NCBIfam" id="TIGR00086">
    <property type="entry name" value="smpB"/>
    <property type="match status" value="1"/>
</dbReference>
<dbReference type="PANTHER" id="PTHR30308:SF2">
    <property type="entry name" value="SSRA-BINDING PROTEIN"/>
    <property type="match status" value="1"/>
</dbReference>
<dbReference type="PANTHER" id="PTHR30308">
    <property type="entry name" value="TMRNA-BINDING COMPONENT OF TRANS-TRANSLATION TAGGING COMPLEX"/>
    <property type="match status" value="1"/>
</dbReference>
<dbReference type="Pfam" id="PF01668">
    <property type="entry name" value="SmpB"/>
    <property type="match status" value="1"/>
</dbReference>
<dbReference type="SUPFAM" id="SSF74982">
    <property type="entry name" value="Small protein B (SmpB)"/>
    <property type="match status" value="1"/>
</dbReference>
<organism>
    <name type="scientific">Symbiobacterium thermophilum (strain DSM 24528 / JCM 14929 / IAM 14863 / T)</name>
    <dbReference type="NCBI Taxonomy" id="292459"/>
    <lineage>
        <taxon>Bacteria</taxon>
        <taxon>Bacillati</taxon>
        <taxon>Bacillota</taxon>
        <taxon>Clostridia</taxon>
        <taxon>Eubacteriales</taxon>
        <taxon>Symbiobacteriaceae</taxon>
        <taxon>Symbiobacterium</taxon>
    </lineage>
</organism>
<feature type="chain" id="PRO_0000103049" description="SsrA-binding protein">
    <location>
        <begin position="1"/>
        <end position="158"/>
    </location>
</feature>
<evidence type="ECO:0000255" key="1">
    <source>
        <dbReference type="HAMAP-Rule" id="MF_00023"/>
    </source>
</evidence>
<sequence length="158" mass="18341">MARAKAEIQPVAENRKARHDYFVEETYEAGIVLVGSEVKSCRAGRVNLRDAYAQIKDGEIFLLNCHISPFEQANRFNHEPLRPRKLLMHKSEIHRLYGKVREKGFTLVPLRLYFNQKGKVKVELALAKGKRAYDKRDDIAAREAKREMARALRGRYDD</sequence>
<keyword id="KW-0963">Cytoplasm</keyword>
<keyword id="KW-1185">Reference proteome</keyword>
<keyword id="KW-0694">RNA-binding</keyword>
<comment type="function">
    <text evidence="1">Required for rescue of stalled ribosomes mediated by trans-translation. Binds to transfer-messenger RNA (tmRNA), required for stable association of tmRNA with ribosomes. tmRNA and SmpB together mimic tRNA shape, replacing the anticodon stem-loop with SmpB. tmRNA is encoded by the ssrA gene; the 2 termini fold to resemble tRNA(Ala) and it encodes a 'tag peptide', a short internal open reading frame. During trans-translation Ala-aminoacylated tmRNA acts like a tRNA, entering the A-site of stalled ribosomes, displacing the stalled mRNA. The ribosome then switches to translate the ORF on the tmRNA; the nascent peptide is terminated with the 'tag peptide' encoded by the tmRNA and targeted for degradation. The ribosome is freed to recommence translation, which seems to be the essential function of trans-translation.</text>
</comment>
<comment type="subcellular location">
    <subcellularLocation>
        <location evidence="1">Cytoplasm</location>
    </subcellularLocation>
    <text evidence="1">The tmRNA-SmpB complex associates with stalled 70S ribosomes.</text>
</comment>
<comment type="similarity">
    <text evidence="1">Belongs to the SmpB family.</text>
</comment>
<accession>Q67SL8</accession>